<keyword id="KW-0028">Amino-acid biosynthesis</keyword>
<keyword id="KW-0100">Branched-chain amino acid biosynthesis</keyword>
<keyword id="KW-0432">Leucine biosynthesis</keyword>
<keyword id="KW-0456">Lyase</keyword>
<sequence length="201" mass="22355">MAEKFTQHTGLVVPLDAANVDTDAIIPKQFLQKVTRTGFGAHLFNDWRFLDDQGQQPNPEFVLNFPEFKGASILLTRENFGCGSSREHAPWALTDYGFKVVIAPSFADIFYGNSFNNQLLPVTLSDAQVDEMFALVKANPGITFEVDLEAEVVKAGDKTYAFSIDAFRRHCMINGLDSIGLTLQHEDAIAAYENKQPAFMN</sequence>
<feature type="chain" id="PRO_1000063760" description="3-isopropylmalate dehydratase small subunit">
    <location>
        <begin position="1"/>
        <end position="201"/>
    </location>
</feature>
<name>LEUD_ENT38</name>
<evidence type="ECO:0000255" key="1">
    <source>
        <dbReference type="HAMAP-Rule" id="MF_01031"/>
    </source>
</evidence>
<gene>
    <name evidence="1" type="primary">leuD</name>
    <name type="ordered locus">Ent638_0619</name>
</gene>
<dbReference type="EC" id="4.2.1.33" evidence="1"/>
<dbReference type="EMBL" id="CP000653">
    <property type="protein sequence ID" value="ABP59306.1"/>
    <property type="molecule type" value="Genomic_DNA"/>
</dbReference>
<dbReference type="RefSeq" id="WP_012016028.1">
    <property type="nucleotide sequence ID" value="NC_009436.1"/>
</dbReference>
<dbReference type="SMR" id="A4W6H6"/>
<dbReference type="STRING" id="399742.Ent638_0619"/>
<dbReference type="KEGG" id="ent:Ent638_0619"/>
<dbReference type="eggNOG" id="COG0066">
    <property type="taxonomic scope" value="Bacteria"/>
</dbReference>
<dbReference type="HOGENOM" id="CLU_081378_0_3_6"/>
<dbReference type="OrthoDB" id="9777465at2"/>
<dbReference type="UniPathway" id="UPA00048">
    <property type="reaction ID" value="UER00071"/>
</dbReference>
<dbReference type="Proteomes" id="UP000000230">
    <property type="component" value="Chromosome"/>
</dbReference>
<dbReference type="GO" id="GO:0009316">
    <property type="term" value="C:3-isopropylmalate dehydratase complex"/>
    <property type="evidence" value="ECO:0007669"/>
    <property type="project" value="InterPro"/>
</dbReference>
<dbReference type="GO" id="GO:0003861">
    <property type="term" value="F:3-isopropylmalate dehydratase activity"/>
    <property type="evidence" value="ECO:0007669"/>
    <property type="project" value="UniProtKB-UniRule"/>
</dbReference>
<dbReference type="GO" id="GO:0009098">
    <property type="term" value="P:L-leucine biosynthetic process"/>
    <property type="evidence" value="ECO:0007669"/>
    <property type="project" value="UniProtKB-UniRule"/>
</dbReference>
<dbReference type="CDD" id="cd01577">
    <property type="entry name" value="IPMI_Swivel"/>
    <property type="match status" value="1"/>
</dbReference>
<dbReference type="FunFam" id="3.20.19.10:FF:000003">
    <property type="entry name" value="3-isopropylmalate dehydratase small subunit"/>
    <property type="match status" value="1"/>
</dbReference>
<dbReference type="Gene3D" id="3.20.19.10">
    <property type="entry name" value="Aconitase, domain 4"/>
    <property type="match status" value="1"/>
</dbReference>
<dbReference type="HAMAP" id="MF_01031">
    <property type="entry name" value="LeuD_type1"/>
    <property type="match status" value="1"/>
</dbReference>
<dbReference type="InterPro" id="IPR004431">
    <property type="entry name" value="3-IsopropMal_deHydase_ssu"/>
</dbReference>
<dbReference type="InterPro" id="IPR015928">
    <property type="entry name" value="Aconitase/3IPM_dehydase_swvl"/>
</dbReference>
<dbReference type="InterPro" id="IPR000573">
    <property type="entry name" value="AconitaseA/IPMdHydase_ssu_swvl"/>
</dbReference>
<dbReference type="InterPro" id="IPR033940">
    <property type="entry name" value="IPMI_Swivel"/>
</dbReference>
<dbReference type="InterPro" id="IPR050075">
    <property type="entry name" value="LeuD"/>
</dbReference>
<dbReference type="NCBIfam" id="TIGR00171">
    <property type="entry name" value="leuD"/>
    <property type="match status" value="1"/>
</dbReference>
<dbReference type="NCBIfam" id="NF002458">
    <property type="entry name" value="PRK01641.1"/>
    <property type="match status" value="1"/>
</dbReference>
<dbReference type="PANTHER" id="PTHR43345:SF5">
    <property type="entry name" value="3-ISOPROPYLMALATE DEHYDRATASE SMALL SUBUNIT"/>
    <property type="match status" value="1"/>
</dbReference>
<dbReference type="PANTHER" id="PTHR43345">
    <property type="entry name" value="3-ISOPROPYLMALATE DEHYDRATASE SMALL SUBUNIT 2-RELATED-RELATED"/>
    <property type="match status" value="1"/>
</dbReference>
<dbReference type="Pfam" id="PF00694">
    <property type="entry name" value="Aconitase_C"/>
    <property type="match status" value="1"/>
</dbReference>
<dbReference type="SUPFAM" id="SSF52016">
    <property type="entry name" value="LeuD/IlvD-like"/>
    <property type="match status" value="1"/>
</dbReference>
<organism>
    <name type="scientific">Enterobacter sp. (strain 638)</name>
    <dbReference type="NCBI Taxonomy" id="399742"/>
    <lineage>
        <taxon>Bacteria</taxon>
        <taxon>Pseudomonadati</taxon>
        <taxon>Pseudomonadota</taxon>
        <taxon>Gammaproteobacteria</taxon>
        <taxon>Enterobacterales</taxon>
        <taxon>Enterobacteriaceae</taxon>
        <taxon>Enterobacter</taxon>
    </lineage>
</organism>
<protein>
    <recommendedName>
        <fullName evidence="1">3-isopropylmalate dehydratase small subunit</fullName>
        <ecNumber evidence="1">4.2.1.33</ecNumber>
    </recommendedName>
    <alternativeName>
        <fullName evidence="1">Alpha-IPM isomerase</fullName>
        <shortName evidence="1">IPMI</shortName>
    </alternativeName>
    <alternativeName>
        <fullName evidence="1">Isopropylmalate isomerase</fullName>
    </alternativeName>
</protein>
<accession>A4W6H6</accession>
<proteinExistence type="inferred from homology"/>
<comment type="function">
    <text evidence="1">Catalyzes the isomerization between 2-isopropylmalate and 3-isopropylmalate, via the formation of 2-isopropylmaleate.</text>
</comment>
<comment type="catalytic activity">
    <reaction evidence="1">
        <text>(2R,3S)-3-isopropylmalate = (2S)-2-isopropylmalate</text>
        <dbReference type="Rhea" id="RHEA:32287"/>
        <dbReference type="ChEBI" id="CHEBI:1178"/>
        <dbReference type="ChEBI" id="CHEBI:35121"/>
        <dbReference type="EC" id="4.2.1.33"/>
    </reaction>
</comment>
<comment type="pathway">
    <text evidence="1">Amino-acid biosynthesis; L-leucine biosynthesis; L-leucine from 3-methyl-2-oxobutanoate: step 2/4.</text>
</comment>
<comment type="subunit">
    <text evidence="1">Heterodimer of LeuC and LeuD.</text>
</comment>
<comment type="similarity">
    <text evidence="1">Belongs to the LeuD family. LeuD type 1 subfamily.</text>
</comment>
<reference key="1">
    <citation type="journal article" date="2010" name="PLoS Genet.">
        <title>Genome sequence of the plant growth promoting endophytic bacterium Enterobacter sp. 638.</title>
        <authorList>
            <person name="Taghavi S."/>
            <person name="van der Lelie D."/>
            <person name="Hoffman A."/>
            <person name="Zhang Y.B."/>
            <person name="Walla M.D."/>
            <person name="Vangronsveld J."/>
            <person name="Newman L."/>
            <person name="Monchy S."/>
        </authorList>
    </citation>
    <scope>NUCLEOTIDE SEQUENCE [LARGE SCALE GENOMIC DNA]</scope>
    <source>
        <strain>638</strain>
    </source>
</reference>